<comment type="function">
    <text evidence="4">Catalyzes the O-sulfation of tyrosine residues within acidic motifs of polypeptides, using 3'-phosphoadenylyl sulfate (PAPS) as cosubstrate.</text>
</comment>
<comment type="catalytic activity">
    <reaction evidence="4">
        <text>L-tyrosyl-[protein] + 3'-phosphoadenylyl sulfate = O-sulfo-L-tyrosine-[protein] + adenosine 3',5'-bisphosphate + H(+)</text>
        <dbReference type="Rhea" id="RHEA:16801"/>
        <dbReference type="Rhea" id="RHEA-COMP:10136"/>
        <dbReference type="Rhea" id="RHEA-COMP:11688"/>
        <dbReference type="ChEBI" id="CHEBI:15378"/>
        <dbReference type="ChEBI" id="CHEBI:46858"/>
        <dbReference type="ChEBI" id="CHEBI:58339"/>
        <dbReference type="ChEBI" id="CHEBI:58343"/>
        <dbReference type="ChEBI" id="CHEBI:65286"/>
        <dbReference type="EC" id="2.8.2.20"/>
    </reaction>
</comment>
<comment type="subunit">
    <text evidence="2 3">Homodimer (PubMed:23481380). Can also form heterodimers with TPST1 (PubMed:25660941).</text>
</comment>
<comment type="subcellular location">
    <subcellularLocation>
        <location evidence="3">Golgi apparatus membrane</location>
        <topology evidence="3">Single-pass type II membrane protein</topology>
    </subcellularLocation>
</comment>
<comment type="tissue specificity">
    <text evidence="4 5">Widely expressed.</text>
</comment>
<comment type="PTM">
    <text evidence="4">N-glycosylated.</text>
</comment>
<comment type="miscellaneous">
    <text>Substrate peptides must be flexible in order to adopt an L-shaped conformation in the deep binding cleft.</text>
</comment>
<comment type="similarity">
    <text evidence="6">Belongs to the protein sulfotransferase family.</text>
</comment>
<organism>
    <name type="scientific">Homo sapiens</name>
    <name type="common">Human</name>
    <dbReference type="NCBI Taxonomy" id="9606"/>
    <lineage>
        <taxon>Eukaryota</taxon>
        <taxon>Metazoa</taxon>
        <taxon>Chordata</taxon>
        <taxon>Craniata</taxon>
        <taxon>Vertebrata</taxon>
        <taxon>Euteleostomi</taxon>
        <taxon>Mammalia</taxon>
        <taxon>Eutheria</taxon>
        <taxon>Euarchontoglires</taxon>
        <taxon>Primates</taxon>
        <taxon>Haplorrhini</taxon>
        <taxon>Catarrhini</taxon>
        <taxon>Hominidae</taxon>
        <taxon>Homo</taxon>
    </lineage>
</organism>
<name>TPST2_HUMAN</name>
<accession>O60704</accession>
<accession>B3KQA7</accession>
<accession>Q6FI98</accession>
<accession>Q9H0V4</accession>
<dbReference type="EC" id="2.8.2.20" evidence="4"/>
<dbReference type="EMBL" id="AF061254">
    <property type="protein sequence ID" value="AAC34296.1"/>
    <property type="molecule type" value="mRNA"/>
</dbReference>
<dbReference type="EMBL" id="AF049891">
    <property type="protein sequence ID" value="AAC36061.1"/>
    <property type="molecule type" value="mRNA"/>
</dbReference>
<dbReference type="EMBL" id="AJ006198">
    <property type="protein sequence ID" value="CAA06906.1"/>
    <property type="molecule type" value="mRNA"/>
</dbReference>
<dbReference type="EMBL" id="AL136623">
    <property type="protein sequence ID" value="CAB66558.1"/>
    <property type="molecule type" value="mRNA"/>
</dbReference>
<dbReference type="EMBL" id="CR456597">
    <property type="protein sequence ID" value="CAG30483.1"/>
    <property type="molecule type" value="mRNA"/>
</dbReference>
<dbReference type="EMBL" id="CR533528">
    <property type="protein sequence ID" value="CAG38559.1"/>
    <property type="molecule type" value="mRNA"/>
</dbReference>
<dbReference type="EMBL" id="AK074538">
    <property type="protein sequence ID" value="BAG51969.1"/>
    <property type="molecule type" value="mRNA"/>
</dbReference>
<dbReference type="EMBL" id="AK075139">
    <property type="protein sequence ID" value="BAG52071.1"/>
    <property type="molecule type" value="mRNA"/>
</dbReference>
<dbReference type="EMBL" id="Z95115">
    <property type="status" value="NOT_ANNOTATED_CDS"/>
    <property type="molecule type" value="Genomic_DNA"/>
</dbReference>
<dbReference type="EMBL" id="CH471095">
    <property type="protein sequence ID" value="EAW59726.1"/>
    <property type="molecule type" value="Genomic_DNA"/>
</dbReference>
<dbReference type="EMBL" id="BC001057">
    <property type="protein sequence ID" value="AAH01057.1"/>
    <property type="molecule type" value="mRNA"/>
</dbReference>
<dbReference type="EMBL" id="BC017509">
    <property type="protein sequence ID" value="AAH17509.1"/>
    <property type="molecule type" value="mRNA"/>
</dbReference>
<dbReference type="CCDS" id="CCDS13839.1"/>
<dbReference type="RefSeq" id="NP_001008566.1">
    <property type="nucleotide sequence ID" value="NM_001008566.3"/>
</dbReference>
<dbReference type="RefSeq" id="NP_001349851.1">
    <property type="nucleotide sequence ID" value="NM_001362922.2"/>
</dbReference>
<dbReference type="RefSeq" id="NP_003586.3">
    <property type="nucleotide sequence ID" value="NM_003595.3"/>
</dbReference>
<dbReference type="PDB" id="3AP1">
    <property type="method" value="X-ray"/>
    <property type="resolution" value="1.90 A"/>
    <property type="chains" value="A/B=43-359"/>
</dbReference>
<dbReference type="PDB" id="3AP2">
    <property type="method" value="X-ray"/>
    <property type="resolution" value="2.40 A"/>
    <property type="chains" value="A/B=43-359"/>
</dbReference>
<dbReference type="PDB" id="3AP3">
    <property type="method" value="X-ray"/>
    <property type="resolution" value="3.50 A"/>
    <property type="chains" value="A/B/C/D=43-377"/>
</dbReference>
<dbReference type="PDBsum" id="3AP1"/>
<dbReference type="PDBsum" id="3AP2"/>
<dbReference type="PDBsum" id="3AP3"/>
<dbReference type="SMR" id="O60704"/>
<dbReference type="BioGRID" id="114037">
    <property type="interactions" value="124"/>
</dbReference>
<dbReference type="FunCoup" id="O60704">
    <property type="interactions" value="593"/>
</dbReference>
<dbReference type="IntAct" id="O60704">
    <property type="interactions" value="110"/>
</dbReference>
<dbReference type="STRING" id="9606.ENSP00000339813"/>
<dbReference type="BindingDB" id="O60704"/>
<dbReference type="ChEMBL" id="CHEMBL3178"/>
<dbReference type="GlyCosmos" id="O60704">
    <property type="glycosylation" value="3 sites, 1 glycan"/>
</dbReference>
<dbReference type="GlyGen" id="O60704">
    <property type="glycosylation" value="8 sites, 1 N-linked glycan (1 site), 2 O-linked glycans (4 sites)"/>
</dbReference>
<dbReference type="iPTMnet" id="O60704"/>
<dbReference type="PhosphoSitePlus" id="O60704"/>
<dbReference type="BioMuta" id="TPST2"/>
<dbReference type="jPOST" id="O60704"/>
<dbReference type="MassIVE" id="O60704"/>
<dbReference type="PaxDb" id="9606-ENSP00000339813"/>
<dbReference type="PeptideAtlas" id="O60704"/>
<dbReference type="ProteomicsDB" id="49532"/>
<dbReference type="Pumba" id="O60704"/>
<dbReference type="Antibodypedia" id="10022">
    <property type="antibodies" value="194 antibodies from 28 providers"/>
</dbReference>
<dbReference type="DNASU" id="8459"/>
<dbReference type="Ensembl" id="ENST00000338754.9">
    <property type="protein sequence ID" value="ENSP00000339813.4"/>
    <property type="gene ID" value="ENSG00000128294.16"/>
</dbReference>
<dbReference type="Ensembl" id="ENST00000398110.6">
    <property type="protein sequence ID" value="ENSP00000381180.2"/>
    <property type="gene ID" value="ENSG00000128294.16"/>
</dbReference>
<dbReference type="Ensembl" id="ENST00000403880.5">
    <property type="protein sequence ID" value="ENSP00000385192.1"/>
    <property type="gene ID" value="ENSG00000128294.16"/>
</dbReference>
<dbReference type="Ensembl" id="ENST00000454778.6">
    <property type="protein sequence ID" value="ENSP00000400357.2"/>
    <property type="gene ID" value="ENSG00000128294.16"/>
</dbReference>
<dbReference type="GeneID" id="8459"/>
<dbReference type="KEGG" id="hsa:8459"/>
<dbReference type="MANE-Select" id="ENST00000338754.9">
    <property type="protein sequence ID" value="ENSP00000339813.4"/>
    <property type="RefSeq nucleotide sequence ID" value="NM_003595.5"/>
    <property type="RefSeq protein sequence ID" value="NP_003586.3"/>
</dbReference>
<dbReference type="UCSC" id="uc003acw.4">
    <property type="organism name" value="human"/>
</dbReference>
<dbReference type="AGR" id="HGNC:12021"/>
<dbReference type="CTD" id="8459"/>
<dbReference type="DisGeNET" id="8459"/>
<dbReference type="GeneCards" id="TPST2"/>
<dbReference type="HGNC" id="HGNC:12021">
    <property type="gene designation" value="TPST2"/>
</dbReference>
<dbReference type="HPA" id="ENSG00000128294">
    <property type="expression patterns" value="Tissue enhanced (pancreas)"/>
</dbReference>
<dbReference type="MIM" id="603126">
    <property type="type" value="gene"/>
</dbReference>
<dbReference type="neXtProt" id="NX_O60704"/>
<dbReference type="OpenTargets" id="ENSG00000128294"/>
<dbReference type="PharmGKB" id="PA36700"/>
<dbReference type="VEuPathDB" id="HostDB:ENSG00000128294"/>
<dbReference type="eggNOG" id="KOG3988">
    <property type="taxonomic scope" value="Eukaryota"/>
</dbReference>
<dbReference type="GeneTree" id="ENSGT00390000006030"/>
<dbReference type="HOGENOM" id="CLU_046916_0_1_1"/>
<dbReference type="InParanoid" id="O60704"/>
<dbReference type="OMA" id="VMMDSNH"/>
<dbReference type="OrthoDB" id="545675at2759"/>
<dbReference type="PAN-GO" id="O60704">
    <property type="GO annotations" value="3 GO annotations based on evolutionary models"/>
</dbReference>
<dbReference type="PhylomeDB" id="O60704"/>
<dbReference type="TreeFam" id="TF312910"/>
<dbReference type="BRENDA" id="2.8.2.20">
    <property type="organism ID" value="2681"/>
</dbReference>
<dbReference type="PathwayCommons" id="O60704"/>
<dbReference type="Reactome" id="R-HSA-156584">
    <property type="pathway name" value="Cytosolic sulfonation of small molecules"/>
</dbReference>
<dbReference type="Reactome" id="R-HSA-163841">
    <property type="pathway name" value="Gamma carboxylation, hypusinylation, hydroxylation, and arylsulfatase activation"/>
</dbReference>
<dbReference type="Reactome" id="R-HSA-9674519">
    <property type="pathway name" value="Defective F8 sulfation at Y1699"/>
</dbReference>
<dbReference type="SignaLink" id="O60704"/>
<dbReference type="BioGRID-ORCS" id="8459">
    <property type="hits" value="20 hits in 1161 CRISPR screens"/>
</dbReference>
<dbReference type="ChiTaRS" id="TPST2">
    <property type="organism name" value="human"/>
</dbReference>
<dbReference type="EvolutionaryTrace" id="O60704"/>
<dbReference type="GenomeRNAi" id="8459"/>
<dbReference type="Pharos" id="O60704">
    <property type="development level" value="Tbio"/>
</dbReference>
<dbReference type="PRO" id="PR:O60704"/>
<dbReference type="Proteomes" id="UP000005640">
    <property type="component" value="Chromosome 22"/>
</dbReference>
<dbReference type="RNAct" id="O60704">
    <property type="molecule type" value="protein"/>
</dbReference>
<dbReference type="Bgee" id="ENSG00000128294">
    <property type="expression patterns" value="Expressed in body of pancreas and 179 other cell types or tissues"/>
</dbReference>
<dbReference type="ExpressionAtlas" id="O60704">
    <property type="expression patterns" value="baseline and differential"/>
</dbReference>
<dbReference type="GO" id="GO:0005783">
    <property type="term" value="C:endoplasmic reticulum"/>
    <property type="evidence" value="ECO:0000314"/>
    <property type="project" value="LIFEdb"/>
</dbReference>
<dbReference type="GO" id="GO:0005794">
    <property type="term" value="C:Golgi apparatus"/>
    <property type="evidence" value="ECO:0000318"/>
    <property type="project" value="GO_Central"/>
</dbReference>
<dbReference type="GO" id="GO:0005796">
    <property type="term" value="C:Golgi lumen"/>
    <property type="evidence" value="ECO:0007669"/>
    <property type="project" value="Ensembl"/>
</dbReference>
<dbReference type="GO" id="GO:0000139">
    <property type="term" value="C:Golgi membrane"/>
    <property type="evidence" value="ECO:0000304"/>
    <property type="project" value="Reactome"/>
</dbReference>
<dbReference type="GO" id="GO:0005802">
    <property type="term" value="C:trans-Golgi network"/>
    <property type="evidence" value="ECO:0007669"/>
    <property type="project" value="Ensembl"/>
</dbReference>
<dbReference type="GO" id="GO:0042803">
    <property type="term" value="F:protein homodimerization activity"/>
    <property type="evidence" value="ECO:0000353"/>
    <property type="project" value="UniProtKB"/>
</dbReference>
<dbReference type="GO" id="GO:0008476">
    <property type="term" value="F:protein-tyrosine sulfotransferase activity"/>
    <property type="evidence" value="ECO:0000314"/>
    <property type="project" value="UniProtKB"/>
</dbReference>
<dbReference type="GO" id="GO:0050427">
    <property type="term" value="P:3'-phosphoadenosine 5'-phosphosulfate metabolic process"/>
    <property type="evidence" value="ECO:0000304"/>
    <property type="project" value="Reactome"/>
</dbReference>
<dbReference type="GO" id="GO:0007342">
    <property type="term" value="P:fusion of sperm to egg plasma membrane involved in single fertilization"/>
    <property type="evidence" value="ECO:0007669"/>
    <property type="project" value="Ensembl"/>
</dbReference>
<dbReference type="GO" id="GO:0006478">
    <property type="term" value="P:peptidyl-tyrosine sulfation"/>
    <property type="evidence" value="ECO:0000314"/>
    <property type="project" value="UniProtKB"/>
</dbReference>
<dbReference type="GO" id="GO:0060468">
    <property type="term" value="P:prevention of polyspermy"/>
    <property type="evidence" value="ECO:0007669"/>
    <property type="project" value="Ensembl"/>
</dbReference>
<dbReference type="FunFam" id="3.40.50.300:FF:000290">
    <property type="entry name" value="Protein-tyrosine sulfotransferase"/>
    <property type="match status" value="1"/>
</dbReference>
<dbReference type="Gene3D" id="3.40.50.300">
    <property type="entry name" value="P-loop containing nucleotide triphosphate hydrolases"/>
    <property type="match status" value="1"/>
</dbReference>
<dbReference type="InterPro" id="IPR027417">
    <property type="entry name" value="P-loop_NTPase"/>
</dbReference>
<dbReference type="InterPro" id="IPR026634">
    <property type="entry name" value="TPST-like"/>
</dbReference>
<dbReference type="PANTHER" id="PTHR12788">
    <property type="entry name" value="PROTEIN-TYROSINE SULFOTRANSFERASE 2"/>
    <property type="match status" value="1"/>
</dbReference>
<dbReference type="PANTHER" id="PTHR12788:SF6">
    <property type="entry name" value="PROTEIN-TYROSINE SULFOTRANSFERASE 2"/>
    <property type="match status" value="1"/>
</dbReference>
<dbReference type="Pfam" id="PF13469">
    <property type="entry name" value="Sulfotransfer_3"/>
    <property type="match status" value="1"/>
</dbReference>
<dbReference type="SUPFAM" id="SSF52540">
    <property type="entry name" value="P-loop containing nucleoside triphosphate hydrolases"/>
    <property type="match status" value="1"/>
</dbReference>
<proteinExistence type="evidence at protein level"/>
<keyword id="KW-0002">3D-structure</keyword>
<keyword id="KW-1015">Disulfide bond</keyword>
<keyword id="KW-0325">Glycoprotein</keyword>
<keyword id="KW-0333">Golgi apparatus</keyword>
<keyword id="KW-0472">Membrane</keyword>
<keyword id="KW-1267">Proteomics identification</keyword>
<keyword id="KW-1185">Reference proteome</keyword>
<keyword id="KW-0735">Signal-anchor</keyword>
<keyword id="KW-0808">Transferase</keyword>
<keyword id="KW-0812">Transmembrane</keyword>
<keyword id="KW-1133">Transmembrane helix</keyword>
<reference key="1">
    <citation type="journal article" date="1998" name="Proc. Natl. Acad. Sci. U.S.A.">
        <title>Existence of distinct tyrosylprotein sulfotransferase genes: molecular characterization of tyrosylprotein sulfotransferase-2.</title>
        <authorList>
            <person name="Beisswanger R."/>
            <person name="Corbeil D."/>
            <person name="Vannier C."/>
            <person name="Thiele C."/>
            <person name="Dohrmann U."/>
            <person name="Kellner R."/>
            <person name="Ashman K."/>
            <person name="Niehrs C."/>
            <person name="Huttner W.B."/>
        </authorList>
    </citation>
    <scope>NUCLEOTIDE SEQUENCE [MRNA]</scope>
    <scope>TISSUE SPECIFICITY</scope>
</reference>
<reference key="2">
    <citation type="journal article" date="1998" name="J. Biol. Chem.">
        <title>Molecular cloning and expression of human and mouse tyrosylprotein sulfotransferase-2 and a tyrosylprotein sulfotransferase homologue in Caenorhabditis elegans.</title>
        <authorList>
            <person name="Ouyang Y.-B."/>
            <person name="Moore K.L."/>
        </authorList>
    </citation>
    <scope>NUCLEOTIDE SEQUENCE [MRNA]</scope>
    <scope>CATALYTIC ACTIVITY</scope>
    <scope>FUNCTION</scope>
    <scope>TISSUE SPECIFICITY</scope>
    <scope>GLYCOSYLATION</scope>
</reference>
<reference key="3">
    <citation type="submission" date="1998-05" db="EMBL/GenBank/DDBJ databases">
        <authorList>
            <person name="Bennett E.P."/>
        </authorList>
    </citation>
    <scope>NUCLEOTIDE SEQUENCE [MRNA]</scope>
</reference>
<reference key="4">
    <citation type="journal article" date="2001" name="Genome Res.">
        <title>Towards a catalog of human genes and proteins: sequencing and analysis of 500 novel complete protein coding human cDNAs.</title>
        <authorList>
            <person name="Wiemann S."/>
            <person name="Weil B."/>
            <person name="Wellenreuther R."/>
            <person name="Gassenhuber J."/>
            <person name="Glassl S."/>
            <person name="Ansorge W."/>
            <person name="Boecher M."/>
            <person name="Bloecker H."/>
            <person name="Bauersachs S."/>
            <person name="Blum H."/>
            <person name="Lauber J."/>
            <person name="Duesterhoeft A."/>
            <person name="Beyer A."/>
            <person name="Koehrer K."/>
            <person name="Strack N."/>
            <person name="Mewes H.-W."/>
            <person name="Ottenwaelder B."/>
            <person name="Obermaier B."/>
            <person name="Tampe J."/>
            <person name="Heubner D."/>
            <person name="Wambutt R."/>
            <person name="Korn B."/>
            <person name="Klein M."/>
            <person name="Poustka A."/>
        </authorList>
    </citation>
    <scope>NUCLEOTIDE SEQUENCE [LARGE SCALE MRNA]</scope>
    <source>
        <tissue>Brain</tissue>
    </source>
</reference>
<reference key="5">
    <citation type="journal article" date="2004" name="Genome Biol.">
        <title>A genome annotation-driven approach to cloning the human ORFeome.</title>
        <authorList>
            <person name="Collins J.E."/>
            <person name="Wright C.L."/>
            <person name="Edwards C.A."/>
            <person name="Davis M.P."/>
            <person name="Grinham J.A."/>
            <person name="Cole C.G."/>
            <person name="Goward M.E."/>
            <person name="Aguado B."/>
            <person name="Mallya M."/>
            <person name="Mokrab Y."/>
            <person name="Huckle E.J."/>
            <person name="Beare D.M."/>
            <person name="Dunham I."/>
        </authorList>
    </citation>
    <scope>NUCLEOTIDE SEQUENCE [LARGE SCALE MRNA]</scope>
</reference>
<reference key="6">
    <citation type="submission" date="2004-06" db="EMBL/GenBank/DDBJ databases">
        <title>Cloning of human full open reading frames in Gateway(TM) system entry vector (pDONR201).</title>
        <authorList>
            <person name="Ebert L."/>
            <person name="Schick M."/>
            <person name="Neubert P."/>
            <person name="Schatten R."/>
            <person name="Henze S."/>
            <person name="Korn B."/>
        </authorList>
    </citation>
    <scope>NUCLEOTIDE SEQUENCE [LARGE SCALE MRNA]</scope>
</reference>
<reference key="7">
    <citation type="journal article" date="2005" name="DNA Res.">
        <title>Signal sequence and keyword trap in silico for selection of full-length human cDNAs encoding secretion or membrane proteins from oligo-capped cDNA libraries.</title>
        <authorList>
            <person name="Otsuki T."/>
            <person name="Ota T."/>
            <person name="Nishikawa T."/>
            <person name="Hayashi K."/>
            <person name="Suzuki Y."/>
            <person name="Yamamoto J."/>
            <person name="Wakamatsu A."/>
            <person name="Kimura K."/>
            <person name="Sakamoto K."/>
            <person name="Hatano N."/>
            <person name="Kawai Y."/>
            <person name="Ishii S."/>
            <person name="Saito K."/>
            <person name="Kojima S."/>
            <person name="Sugiyama T."/>
            <person name="Ono T."/>
            <person name="Okano K."/>
            <person name="Yoshikawa Y."/>
            <person name="Aotsuka S."/>
            <person name="Sasaki N."/>
            <person name="Hattori A."/>
            <person name="Okumura K."/>
            <person name="Nagai K."/>
            <person name="Sugano S."/>
            <person name="Isogai T."/>
        </authorList>
    </citation>
    <scope>NUCLEOTIDE SEQUENCE [LARGE SCALE MRNA]</scope>
    <source>
        <tissue>Embryo</tissue>
        <tissue>Placenta</tissue>
    </source>
</reference>
<reference key="8">
    <citation type="journal article" date="1999" name="Nature">
        <title>The DNA sequence of human chromosome 22.</title>
        <authorList>
            <person name="Dunham I."/>
            <person name="Hunt A.R."/>
            <person name="Collins J.E."/>
            <person name="Bruskiewich R."/>
            <person name="Beare D.M."/>
            <person name="Clamp M."/>
            <person name="Smink L.J."/>
            <person name="Ainscough R."/>
            <person name="Almeida J.P."/>
            <person name="Babbage A.K."/>
            <person name="Bagguley C."/>
            <person name="Bailey J."/>
            <person name="Barlow K.F."/>
            <person name="Bates K.N."/>
            <person name="Beasley O.P."/>
            <person name="Bird C.P."/>
            <person name="Blakey S.E."/>
            <person name="Bridgeman A.M."/>
            <person name="Buck D."/>
            <person name="Burgess J."/>
            <person name="Burrill W.D."/>
            <person name="Burton J."/>
            <person name="Carder C."/>
            <person name="Carter N.P."/>
            <person name="Chen Y."/>
            <person name="Clark G."/>
            <person name="Clegg S.M."/>
            <person name="Cobley V.E."/>
            <person name="Cole C.G."/>
            <person name="Collier R.E."/>
            <person name="Connor R."/>
            <person name="Conroy D."/>
            <person name="Corby N.R."/>
            <person name="Coville G.J."/>
            <person name="Cox A.V."/>
            <person name="Davis J."/>
            <person name="Dawson E."/>
            <person name="Dhami P.D."/>
            <person name="Dockree C."/>
            <person name="Dodsworth S.J."/>
            <person name="Durbin R.M."/>
            <person name="Ellington A.G."/>
            <person name="Evans K.L."/>
            <person name="Fey J.M."/>
            <person name="Fleming K."/>
            <person name="French L."/>
            <person name="Garner A.A."/>
            <person name="Gilbert J.G.R."/>
            <person name="Goward M.E."/>
            <person name="Grafham D.V."/>
            <person name="Griffiths M.N.D."/>
            <person name="Hall C."/>
            <person name="Hall R.E."/>
            <person name="Hall-Tamlyn G."/>
            <person name="Heathcott R.W."/>
            <person name="Ho S."/>
            <person name="Holmes S."/>
            <person name="Hunt S.E."/>
            <person name="Jones M.C."/>
            <person name="Kershaw J."/>
            <person name="Kimberley A.M."/>
            <person name="King A."/>
            <person name="Laird G.K."/>
            <person name="Langford C.F."/>
            <person name="Leversha M.A."/>
            <person name="Lloyd C."/>
            <person name="Lloyd D.M."/>
            <person name="Martyn I.D."/>
            <person name="Mashreghi-Mohammadi M."/>
            <person name="Matthews L.H."/>
            <person name="Mccann O.T."/>
            <person name="Mcclay J."/>
            <person name="Mclaren S."/>
            <person name="McMurray A.A."/>
            <person name="Milne S.A."/>
            <person name="Mortimore B.J."/>
            <person name="Odell C.N."/>
            <person name="Pavitt R."/>
            <person name="Pearce A.V."/>
            <person name="Pearson D."/>
            <person name="Phillimore B.J.C.T."/>
            <person name="Phillips S.H."/>
            <person name="Plumb R.W."/>
            <person name="Ramsay H."/>
            <person name="Ramsey Y."/>
            <person name="Rogers L."/>
            <person name="Ross M.T."/>
            <person name="Scott C.E."/>
            <person name="Sehra H.K."/>
            <person name="Skuce C.D."/>
            <person name="Smalley S."/>
            <person name="Smith M.L."/>
            <person name="Soderlund C."/>
            <person name="Spragon L."/>
            <person name="Steward C.A."/>
            <person name="Sulston J.E."/>
            <person name="Swann R.M."/>
            <person name="Vaudin M."/>
            <person name="Wall M."/>
            <person name="Wallis J.M."/>
            <person name="Whiteley M.N."/>
            <person name="Willey D.L."/>
            <person name="Williams L."/>
            <person name="Williams S.A."/>
            <person name="Williamson H."/>
            <person name="Wilmer T.E."/>
            <person name="Wilming L."/>
            <person name="Wright C.L."/>
            <person name="Hubbard T."/>
            <person name="Bentley D.R."/>
            <person name="Beck S."/>
            <person name="Rogers J."/>
            <person name="Shimizu N."/>
            <person name="Minoshima S."/>
            <person name="Kawasaki K."/>
            <person name="Sasaki T."/>
            <person name="Asakawa S."/>
            <person name="Kudoh J."/>
            <person name="Shintani A."/>
            <person name="Shibuya K."/>
            <person name="Yoshizaki Y."/>
            <person name="Aoki N."/>
            <person name="Mitsuyama S."/>
            <person name="Roe B.A."/>
            <person name="Chen F."/>
            <person name="Chu L."/>
            <person name="Crabtree J."/>
            <person name="Deschamps S."/>
            <person name="Do A."/>
            <person name="Do T."/>
            <person name="Dorman A."/>
            <person name="Fang F."/>
            <person name="Fu Y."/>
            <person name="Hu P."/>
            <person name="Hua A."/>
            <person name="Kenton S."/>
            <person name="Lai H."/>
            <person name="Lao H.I."/>
            <person name="Lewis J."/>
            <person name="Lewis S."/>
            <person name="Lin S.-P."/>
            <person name="Loh P."/>
            <person name="Malaj E."/>
            <person name="Nguyen T."/>
            <person name="Pan H."/>
            <person name="Phan S."/>
            <person name="Qi S."/>
            <person name="Qian Y."/>
            <person name="Ray L."/>
            <person name="Ren Q."/>
            <person name="Shaull S."/>
            <person name="Sloan D."/>
            <person name="Song L."/>
            <person name="Wang Q."/>
            <person name="Wang Y."/>
            <person name="Wang Z."/>
            <person name="White J."/>
            <person name="Willingham D."/>
            <person name="Wu H."/>
            <person name="Yao Z."/>
            <person name="Zhan M."/>
            <person name="Zhang G."/>
            <person name="Chissoe S."/>
            <person name="Murray J."/>
            <person name="Miller N."/>
            <person name="Minx P."/>
            <person name="Fulton R."/>
            <person name="Johnson D."/>
            <person name="Bemis G."/>
            <person name="Bentley D."/>
            <person name="Bradshaw H."/>
            <person name="Bourne S."/>
            <person name="Cordes M."/>
            <person name="Du Z."/>
            <person name="Fulton L."/>
            <person name="Goela D."/>
            <person name="Graves T."/>
            <person name="Hawkins J."/>
            <person name="Hinds K."/>
            <person name="Kemp K."/>
            <person name="Latreille P."/>
            <person name="Layman D."/>
            <person name="Ozersky P."/>
            <person name="Rohlfing T."/>
            <person name="Scheet P."/>
            <person name="Walker C."/>
            <person name="Wamsley A."/>
            <person name="Wohldmann P."/>
            <person name="Pepin K."/>
            <person name="Nelson J."/>
            <person name="Korf I."/>
            <person name="Bedell J.A."/>
            <person name="Hillier L.W."/>
            <person name="Mardis E."/>
            <person name="Waterston R."/>
            <person name="Wilson R."/>
            <person name="Emanuel B.S."/>
            <person name="Shaikh T."/>
            <person name="Kurahashi H."/>
            <person name="Saitta S."/>
            <person name="Budarf M.L."/>
            <person name="McDermid H.E."/>
            <person name="Johnson A."/>
            <person name="Wong A.C.C."/>
            <person name="Morrow B.E."/>
            <person name="Edelmann L."/>
            <person name="Kim U.J."/>
            <person name="Shizuya H."/>
            <person name="Simon M.I."/>
            <person name="Dumanski J.P."/>
            <person name="Peyrard M."/>
            <person name="Kedra D."/>
            <person name="Seroussi E."/>
            <person name="Fransson I."/>
            <person name="Tapia I."/>
            <person name="Bruder C.E."/>
            <person name="O'Brien K.P."/>
            <person name="Wilkinson P."/>
            <person name="Bodenteich A."/>
            <person name="Hartman K."/>
            <person name="Hu X."/>
            <person name="Khan A.S."/>
            <person name="Lane L."/>
            <person name="Tilahun Y."/>
            <person name="Wright H."/>
        </authorList>
    </citation>
    <scope>NUCLEOTIDE SEQUENCE [LARGE SCALE GENOMIC DNA]</scope>
</reference>
<reference key="9">
    <citation type="submission" date="2005-07" db="EMBL/GenBank/DDBJ databases">
        <authorList>
            <person name="Mural R.J."/>
            <person name="Istrail S."/>
            <person name="Sutton G.G."/>
            <person name="Florea L."/>
            <person name="Halpern A.L."/>
            <person name="Mobarry C.M."/>
            <person name="Lippert R."/>
            <person name="Walenz B."/>
            <person name="Shatkay H."/>
            <person name="Dew I."/>
            <person name="Miller J.R."/>
            <person name="Flanigan M.J."/>
            <person name="Edwards N.J."/>
            <person name="Bolanos R."/>
            <person name="Fasulo D."/>
            <person name="Halldorsson B.V."/>
            <person name="Hannenhalli S."/>
            <person name="Turner R."/>
            <person name="Yooseph S."/>
            <person name="Lu F."/>
            <person name="Nusskern D.R."/>
            <person name="Shue B.C."/>
            <person name="Zheng X.H."/>
            <person name="Zhong F."/>
            <person name="Delcher A.L."/>
            <person name="Huson D.H."/>
            <person name="Kravitz S.A."/>
            <person name="Mouchard L."/>
            <person name="Reinert K."/>
            <person name="Remington K.A."/>
            <person name="Clark A.G."/>
            <person name="Waterman M.S."/>
            <person name="Eichler E.E."/>
            <person name="Adams M.D."/>
            <person name="Hunkapiller M.W."/>
            <person name="Myers E.W."/>
            <person name="Venter J.C."/>
        </authorList>
    </citation>
    <scope>NUCLEOTIDE SEQUENCE [LARGE SCALE GENOMIC DNA]</scope>
</reference>
<reference key="10">
    <citation type="journal article" date="2004" name="Genome Res.">
        <title>The status, quality, and expansion of the NIH full-length cDNA project: the Mammalian Gene Collection (MGC).</title>
        <authorList>
            <consortium name="The MGC Project Team"/>
        </authorList>
    </citation>
    <scope>NUCLEOTIDE SEQUENCE [LARGE SCALE MRNA]</scope>
    <source>
        <tissue>Brain</tissue>
        <tissue>Colon</tissue>
    </source>
</reference>
<reference key="11">
    <citation type="journal article" date="2015" name="J. Mol. Biol.">
        <title>Heterodimers of tyrosylprotein sulfotransferases suggest existence of a higher organization level of transferases in the membrane of the trans-Golgi apparatus.</title>
        <authorList>
            <person name="Hartmann-Fatu C."/>
            <person name="Trusch F."/>
            <person name="Moll C.N."/>
            <person name="Michin I."/>
            <person name="Hassinen A."/>
            <person name="Kellokumpu S."/>
            <person name="Bayer P."/>
        </authorList>
    </citation>
    <scope>SUBCELLULAR LOCATION</scope>
    <scope>TOPOLOGY</scope>
    <scope>INTERACTION WITH TPST1</scope>
</reference>
<reference key="12">
    <citation type="journal article" date="2013" name="Nat. Commun.">
        <title>Crystal structure of human tyrosylprotein sulfotransferase-2 reveals the mechanism of protein tyrosine sulfation reaction.</title>
        <authorList>
            <person name="Teramoto T."/>
            <person name="Fujikawa Y."/>
            <person name="Kawaguchi Y."/>
            <person name="Kurogi K."/>
            <person name="Soejima M."/>
            <person name="Adachi R."/>
            <person name="Nakanishi Y."/>
            <person name="Mishiro-Sato E."/>
            <person name="Liu M.C."/>
            <person name="Sakakibara Y."/>
            <person name="Suiko M."/>
            <person name="Kimura M."/>
            <person name="Kakuta Y."/>
        </authorList>
    </citation>
    <scope>X-RAY CRYSTALLOGRAPHY (1.9 ANGSTROMS) OF 43-359 IN COMPLEX WITH ADENOSINE 3',5'-BISPHOSPHATE AND SUBSTRATE PEPTIDE</scope>
    <scope>DISULFIDE BONDS</scope>
    <scope>SUBUNIT</scope>
    <scope>ACTIVE SITE</scope>
    <scope>MUTAGENESIS OF ARG-78; GLU-99; ARG-101; TRP-113; LYS-158; THR-198 AND SER-285</scope>
</reference>
<gene>
    <name type="primary">TPST2</name>
</gene>
<protein>
    <recommendedName>
        <fullName>Protein-tyrosine sulfotransferase 2</fullName>
        <ecNumber evidence="4">2.8.2.20</ecNumber>
    </recommendedName>
    <alternativeName>
        <fullName>Tyrosylprotein sulfotransferase 2</fullName>
        <shortName>TPST-2</shortName>
    </alternativeName>
</protein>
<sequence length="377" mass="41912">MRLSVRRVLLAAGCALVLVLAVQLGQQVLECRAVLAGLRSPRGAMRPEQEELVMVGTNHVEYRYGKAMPLIFVGGVPRSGTTLMRAMLDAHPEVRCGEETRIIPRVLAMRQAWSKSGREKLRLDEAGVTDEVLDAAMQAFILEVIAKHGEPARVLCNKDPFTLKSSVYLSRLFPNSKFLLMVRDGRASVHSMITRKVTIAGFDLSSYRDCLTKWNKAIEVMYAQCMEVGKEKCLPVYYEQLVLHPRRSLKLILDFLGIAWSDAVLHHEDLIGKPGGVSLSKIERSTDQVIKPVNLEALSKWTGHIPGDVVRDMAQIAPMLAQLGYDPYANPPNYGNPDPFVINNTQRVLKGDYKTPANLKGYFQVNQNSTSSHLGSS</sequence>
<feature type="chain" id="PRO_0000189829" description="Protein-tyrosine sulfotransferase 2">
    <location>
        <begin position="1"/>
        <end position="377"/>
    </location>
</feature>
<feature type="topological domain" description="Cytoplasmic" evidence="1">
    <location>
        <begin position="1"/>
        <end position="8"/>
    </location>
</feature>
<feature type="transmembrane region" description="Helical; Signal-anchor for type II membrane protein" evidence="1">
    <location>
        <begin position="9"/>
        <end position="25"/>
    </location>
</feature>
<feature type="topological domain" description="Lumenal" evidence="1">
    <location>
        <begin position="26"/>
        <end position="377"/>
    </location>
</feature>
<feature type="region of interest" description="Interaction with peptide substrate" evidence="2">
    <location>
        <begin position="101"/>
        <end position="105"/>
    </location>
</feature>
<feature type="active site" description="Proton donor/acceptor" evidence="7">
    <location>
        <position position="99"/>
    </location>
</feature>
<feature type="binding site" evidence="8 9 10">
    <location>
        <begin position="78"/>
        <end position="82"/>
    </location>
    <ligand>
        <name>3'-phosphoadenylyl sulfate</name>
        <dbReference type="ChEBI" id="CHEBI:58339"/>
    </ligand>
</feature>
<feature type="binding site" evidence="7 8 9 10">
    <location>
        <position position="183"/>
    </location>
    <ligand>
        <name>3'-phosphoadenylyl sulfate</name>
        <dbReference type="ChEBI" id="CHEBI:58339"/>
    </ligand>
</feature>
<feature type="binding site" evidence="7 8 9 10">
    <location>
        <position position="191"/>
    </location>
    <ligand>
        <name>3'-phosphoadenylyl sulfate</name>
        <dbReference type="ChEBI" id="CHEBI:58339"/>
    </ligand>
</feature>
<feature type="binding site" evidence="7 8 9 10">
    <location>
        <position position="195"/>
    </location>
    <ligand>
        <name>3'-phosphoadenylyl sulfate</name>
        <dbReference type="ChEBI" id="CHEBI:58339"/>
    </ligand>
</feature>
<feature type="binding site" evidence="7 8 9 10">
    <location>
        <position position="238"/>
    </location>
    <ligand>
        <name>3'-phosphoadenylyl sulfate</name>
        <dbReference type="ChEBI" id="CHEBI:58339"/>
    </ligand>
</feature>
<feature type="binding site" evidence="8 9 10">
    <location>
        <begin position="285"/>
        <end position="294"/>
    </location>
    <ligand>
        <name>3'-phosphoadenylyl sulfate</name>
        <dbReference type="ChEBI" id="CHEBI:58339"/>
    </ligand>
</feature>
<feature type="binding site" evidence="7 8 9 10">
    <location>
        <position position="300"/>
    </location>
    <ligand>
        <name>3'-phosphoadenylyl sulfate</name>
        <dbReference type="ChEBI" id="CHEBI:58339"/>
    </ligand>
</feature>
<feature type="site" description="Transition state stabilizer" evidence="7">
    <location>
        <position position="158"/>
    </location>
</feature>
<feature type="site" description="Transition state stabilizer" evidence="7">
    <location>
        <position position="285"/>
    </location>
</feature>
<feature type="glycosylation site" description="N-linked (GlcNAc...) asparagine" evidence="1">
    <location>
        <position position="343"/>
    </location>
</feature>
<feature type="glycosylation site" description="N-linked (GlcNAc...) asparagine" evidence="1">
    <location>
        <position position="368"/>
    </location>
</feature>
<feature type="disulfide bond" evidence="2 8 9 10">
    <location>
        <begin position="96"/>
        <end position="156"/>
    </location>
</feature>
<feature type="disulfide bond" evidence="2 8 9 10">
    <location>
        <begin position="225"/>
        <end position="233"/>
    </location>
</feature>
<feature type="mutagenesis site" description="Strongly reduced enzymatic activity." evidence="2">
    <original>R</original>
    <variation>A</variation>
    <location>
        <position position="78"/>
    </location>
</feature>
<feature type="mutagenesis site" description="Loss of sulfotransferase activity." evidence="2">
    <original>E</original>
    <variation>A</variation>
    <location>
        <position position="99"/>
    </location>
</feature>
<feature type="mutagenesis site" description="Prevents dimerization and strongly decreases enzyme activity." evidence="2">
    <original>R</original>
    <variation>A</variation>
    <location>
        <position position="101"/>
    </location>
</feature>
<feature type="mutagenesis site" description="Prevents dimerization and decreases enzyme activity." evidence="2">
    <original>W</original>
    <variation>A</variation>
    <location>
        <position position="113"/>
    </location>
</feature>
<feature type="mutagenesis site" description="Nearly complete loss of enzymatic activity." evidence="2">
    <original>K</original>
    <variation>A</variation>
    <location>
        <position position="158"/>
    </location>
</feature>
<feature type="mutagenesis site" description="Slightly decreased sulfotransferase activity." evidence="2">
    <original>T</original>
    <variation>A</variation>
    <location>
        <position position="198"/>
    </location>
</feature>
<feature type="mutagenesis site" description="Abolishes sulfotransferase activity." evidence="2">
    <original>S</original>
    <variation>A</variation>
    <location>
        <position position="285"/>
    </location>
</feature>
<feature type="sequence conflict" description="In Ref. 4; CAB66558 and 6; CAG38559." evidence="6" ref="4 6">
    <original>Q</original>
    <variation>L</variation>
    <location>
        <position position="26"/>
    </location>
</feature>
<feature type="sequence conflict" description="In Ref. 4; CAB66558 and 6; CAG38559." evidence="6" ref="4 6">
    <original>V</original>
    <variation>E</variation>
    <location>
        <position position="73"/>
    </location>
</feature>
<feature type="sequence conflict" description="In Ref. 6; CAG38559." evidence="6" ref="6">
    <original>K</original>
    <variation>M</variation>
    <location>
        <position position="115"/>
    </location>
</feature>
<feature type="strand" evidence="12">
    <location>
        <begin position="52"/>
        <end position="54"/>
    </location>
</feature>
<feature type="strand" evidence="12">
    <location>
        <begin position="62"/>
        <end position="64"/>
    </location>
</feature>
<feature type="strand" evidence="11">
    <location>
        <begin position="71"/>
        <end position="74"/>
    </location>
</feature>
<feature type="strand" evidence="11">
    <location>
        <begin position="76"/>
        <end position="80"/>
    </location>
</feature>
<feature type="helix" evidence="11">
    <location>
        <begin position="81"/>
        <end position="89"/>
    </location>
</feature>
<feature type="helix" evidence="11">
    <location>
        <begin position="102"/>
        <end position="115"/>
    </location>
</feature>
<feature type="helix" evidence="11">
    <location>
        <begin position="117"/>
        <end position="125"/>
    </location>
</feature>
<feature type="helix" evidence="11">
    <location>
        <begin position="130"/>
        <end position="147"/>
    </location>
</feature>
<feature type="strand" evidence="11">
    <location>
        <begin position="153"/>
        <end position="158"/>
    </location>
</feature>
<feature type="helix" evidence="11">
    <location>
        <begin position="160"/>
        <end position="165"/>
    </location>
</feature>
<feature type="helix" evidence="11">
    <location>
        <begin position="166"/>
        <end position="172"/>
    </location>
</feature>
<feature type="strand" evidence="11">
    <location>
        <begin position="177"/>
        <end position="182"/>
    </location>
</feature>
<feature type="helix" evidence="11">
    <location>
        <begin position="185"/>
        <end position="195"/>
    </location>
</feature>
<feature type="helix" evidence="11">
    <location>
        <begin position="207"/>
        <end position="228"/>
    </location>
</feature>
<feature type="turn" evidence="11">
    <location>
        <begin position="230"/>
        <end position="232"/>
    </location>
</feature>
<feature type="strand" evidence="11">
    <location>
        <begin position="233"/>
        <end position="237"/>
    </location>
</feature>
<feature type="helix" evidence="11">
    <location>
        <begin position="238"/>
        <end position="243"/>
    </location>
</feature>
<feature type="helix" evidence="11">
    <location>
        <begin position="245"/>
        <end position="256"/>
    </location>
</feature>
<feature type="helix" evidence="11">
    <location>
        <begin position="262"/>
        <end position="265"/>
    </location>
</feature>
<feature type="helix" evidence="11">
    <location>
        <begin position="267"/>
        <end position="269"/>
    </location>
</feature>
<feature type="strand" evidence="13">
    <location>
        <begin position="283"/>
        <end position="285"/>
    </location>
</feature>
<feature type="helix" evidence="11">
    <location>
        <begin position="286"/>
        <end position="289"/>
    </location>
</feature>
<feature type="turn" evidence="11">
    <location>
        <begin position="300"/>
        <end position="303"/>
    </location>
</feature>
<feature type="helix" evidence="11">
    <location>
        <begin position="307"/>
        <end position="316"/>
    </location>
</feature>
<feature type="helix" evidence="11">
    <location>
        <begin position="319"/>
        <end position="322"/>
    </location>
</feature>
<feature type="strand" evidence="11">
    <location>
        <begin position="329"/>
        <end position="331"/>
    </location>
</feature>
<feature type="helix" evidence="11">
    <location>
        <begin position="339"/>
        <end position="349"/>
    </location>
</feature>
<evidence type="ECO:0000255" key="1"/>
<evidence type="ECO:0000269" key="2">
    <source>
    </source>
</evidence>
<evidence type="ECO:0000269" key="3">
    <source>
    </source>
</evidence>
<evidence type="ECO:0000269" key="4">
    <source>
    </source>
</evidence>
<evidence type="ECO:0000269" key="5">
    <source>
    </source>
</evidence>
<evidence type="ECO:0000305" key="6"/>
<evidence type="ECO:0000305" key="7">
    <source>
    </source>
</evidence>
<evidence type="ECO:0007744" key="8">
    <source>
        <dbReference type="PDB" id="3AP1"/>
    </source>
</evidence>
<evidence type="ECO:0007744" key="9">
    <source>
        <dbReference type="PDB" id="3AP2"/>
    </source>
</evidence>
<evidence type="ECO:0007744" key="10">
    <source>
        <dbReference type="PDB" id="3AP3"/>
    </source>
</evidence>
<evidence type="ECO:0007829" key="11">
    <source>
        <dbReference type="PDB" id="3AP1"/>
    </source>
</evidence>
<evidence type="ECO:0007829" key="12">
    <source>
        <dbReference type="PDB" id="3AP2"/>
    </source>
</evidence>
<evidence type="ECO:0007829" key="13">
    <source>
        <dbReference type="PDB" id="3AP3"/>
    </source>
</evidence>